<accession>Q6G835</accession>
<feature type="chain" id="PRO_0000386496" description="Diacylglycerol kinase">
    <location>
        <begin position="1"/>
        <end position="315"/>
    </location>
</feature>
<feature type="domain" description="DAGKc" evidence="2">
    <location>
        <begin position="1"/>
        <end position="132"/>
    </location>
</feature>
<feature type="active site" description="Proton acceptor" evidence="1">
    <location>
        <position position="273"/>
    </location>
</feature>
<feature type="binding site" evidence="2">
    <location>
        <begin position="10"/>
        <end position="14"/>
    </location>
    <ligand>
        <name>ATP</name>
        <dbReference type="ChEBI" id="CHEBI:30616"/>
    </ligand>
</feature>
<feature type="binding site" evidence="2">
    <location>
        <position position="41"/>
    </location>
    <ligand>
        <name>ATP</name>
        <dbReference type="ChEBI" id="CHEBI:30616"/>
    </ligand>
</feature>
<feature type="binding site" evidence="2">
    <location>
        <begin position="67"/>
        <end position="73"/>
    </location>
    <ligand>
        <name>ATP</name>
        <dbReference type="ChEBI" id="CHEBI:30616"/>
    </ligand>
</feature>
<feature type="binding site" evidence="2">
    <location>
        <position position="94"/>
    </location>
    <ligand>
        <name>ATP</name>
        <dbReference type="ChEBI" id="CHEBI:30616"/>
    </ligand>
</feature>
<feature type="binding site" evidence="1">
    <location>
        <position position="213"/>
    </location>
    <ligand>
        <name>Mg(2+)</name>
        <dbReference type="ChEBI" id="CHEBI:18420"/>
    </ligand>
</feature>
<feature type="binding site" evidence="1">
    <location>
        <position position="216"/>
    </location>
    <ligand>
        <name>Mg(2+)</name>
        <dbReference type="ChEBI" id="CHEBI:18420"/>
    </ligand>
</feature>
<feature type="binding site" evidence="1">
    <location>
        <position position="218"/>
    </location>
    <ligand>
        <name>Mg(2+)</name>
        <dbReference type="ChEBI" id="CHEBI:18420"/>
    </ligand>
</feature>
<sequence>MRKRARIIYNPTSGKELFKRELPDALIKLEKAGYETSAYATEKIGDATLEAERAMHENYDVLIAAGGDGTLNEVVNGIAEKPNRPKLGVIPMGTVNDFGRALHIPNDIMGALDVIIEGHSTKVDIGKMNNRYFINLAAGGQLTQVSYETPSKLKSIVGPFAYYIKGFEMLPQMKAVDLRIEYDGNVFQGEALLFFLGLTNSMAGFEKLVPDAKLDDGYFTLIIVEKSNLAELGHIMTLASRGEHTKHPKVIYEKAKAINISSFTDLQLNVDGEYGGKLPANFLNLERHIDVFAPNDIVNEELINNDHVDDNLIEE</sequence>
<dbReference type="EC" id="2.7.1.107" evidence="1"/>
<dbReference type="EMBL" id="BX571857">
    <property type="protein sequence ID" value="CAG43626.1"/>
    <property type="molecule type" value="Genomic_DNA"/>
</dbReference>
<dbReference type="RefSeq" id="WP_001231451.1">
    <property type="nucleotide sequence ID" value="NC_002953.3"/>
</dbReference>
<dbReference type="SMR" id="Q6G835"/>
<dbReference type="KEGG" id="sas:SAS1820"/>
<dbReference type="HOGENOM" id="CLU_045532_1_0_9"/>
<dbReference type="GO" id="GO:0005886">
    <property type="term" value="C:plasma membrane"/>
    <property type="evidence" value="ECO:0007669"/>
    <property type="project" value="TreeGrafter"/>
</dbReference>
<dbReference type="GO" id="GO:0005524">
    <property type="term" value="F:ATP binding"/>
    <property type="evidence" value="ECO:0007669"/>
    <property type="project" value="UniProtKB-KW"/>
</dbReference>
<dbReference type="GO" id="GO:0004143">
    <property type="term" value="F:ATP-dependent diacylglycerol kinase activity"/>
    <property type="evidence" value="ECO:0007669"/>
    <property type="project" value="UniProtKB-EC"/>
</dbReference>
<dbReference type="GO" id="GO:0046872">
    <property type="term" value="F:metal ion binding"/>
    <property type="evidence" value="ECO:0007669"/>
    <property type="project" value="UniProtKB-KW"/>
</dbReference>
<dbReference type="GO" id="GO:0008654">
    <property type="term" value="P:phospholipid biosynthetic process"/>
    <property type="evidence" value="ECO:0007669"/>
    <property type="project" value="UniProtKB-KW"/>
</dbReference>
<dbReference type="FunFam" id="2.60.200.40:FF:000015">
    <property type="entry name" value="Diacylglycerol kinase"/>
    <property type="match status" value="1"/>
</dbReference>
<dbReference type="FunFam" id="3.40.50.10330:FF:000008">
    <property type="entry name" value="Probable lipid kinase YegS"/>
    <property type="match status" value="1"/>
</dbReference>
<dbReference type="Gene3D" id="2.60.200.40">
    <property type="match status" value="1"/>
</dbReference>
<dbReference type="Gene3D" id="3.40.50.10330">
    <property type="entry name" value="Probable inorganic polyphosphate/atp-NAD kinase, domain 1"/>
    <property type="match status" value="1"/>
</dbReference>
<dbReference type="InterPro" id="IPR017438">
    <property type="entry name" value="ATP-NAD_kinase_N"/>
</dbReference>
<dbReference type="InterPro" id="IPR005218">
    <property type="entry name" value="Diacylglycerol/lipid_kinase"/>
</dbReference>
<dbReference type="InterPro" id="IPR001206">
    <property type="entry name" value="Diacylglycerol_kinase_cat_dom"/>
</dbReference>
<dbReference type="InterPro" id="IPR050187">
    <property type="entry name" value="Lipid_Phosphate_FormReg"/>
</dbReference>
<dbReference type="InterPro" id="IPR016064">
    <property type="entry name" value="NAD/diacylglycerol_kinase_sf"/>
</dbReference>
<dbReference type="InterPro" id="IPR045540">
    <property type="entry name" value="YegS/DAGK_C"/>
</dbReference>
<dbReference type="NCBIfam" id="NF009603">
    <property type="entry name" value="PRK13055.1"/>
    <property type="match status" value="1"/>
</dbReference>
<dbReference type="NCBIfam" id="NF009874">
    <property type="entry name" value="PRK13337.1"/>
    <property type="match status" value="1"/>
</dbReference>
<dbReference type="NCBIfam" id="TIGR00147">
    <property type="entry name" value="YegS/Rv2252/BmrU family lipid kinase"/>
    <property type="match status" value="1"/>
</dbReference>
<dbReference type="PANTHER" id="PTHR12358:SF106">
    <property type="entry name" value="LIPID KINASE YEGS"/>
    <property type="match status" value="1"/>
</dbReference>
<dbReference type="PANTHER" id="PTHR12358">
    <property type="entry name" value="SPHINGOSINE KINASE"/>
    <property type="match status" value="1"/>
</dbReference>
<dbReference type="Pfam" id="PF00781">
    <property type="entry name" value="DAGK_cat"/>
    <property type="match status" value="1"/>
</dbReference>
<dbReference type="Pfam" id="PF19279">
    <property type="entry name" value="YegS_C"/>
    <property type="match status" value="1"/>
</dbReference>
<dbReference type="SMART" id="SM00046">
    <property type="entry name" value="DAGKc"/>
    <property type="match status" value="1"/>
</dbReference>
<dbReference type="SUPFAM" id="SSF111331">
    <property type="entry name" value="NAD kinase/diacylglycerol kinase-like"/>
    <property type="match status" value="1"/>
</dbReference>
<dbReference type="PROSITE" id="PS50146">
    <property type="entry name" value="DAGK"/>
    <property type="match status" value="1"/>
</dbReference>
<gene>
    <name type="primary">dagK</name>
    <name type="ordered locus">SAS1820</name>
</gene>
<organism>
    <name type="scientific">Staphylococcus aureus (strain MSSA476)</name>
    <dbReference type="NCBI Taxonomy" id="282459"/>
    <lineage>
        <taxon>Bacteria</taxon>
        <taxon>Bacillati</taxon>
        <taxon>Bacillota</taxon>
        <taxon>Bacilli</taxon>
        <taxon>Bacillales</taxon>
        <taxon>Staphylococcaceae</taxon>
        <taxon>Staphylococcus</taxon>
    </lineage>
</organism>
<evidence type="ECO:0000250" key="1">
    <source>
        <dbReference type="UniProtKB" id="Q6GFF9"/>
    </source>
</evidence>
<evidence type="ECO:0000255" key="2">
    <source>
        <dbReference type="PROSITE-ProRule" id="PRU00783"/>
    </source>
</evidence>
<evidence type="ECO:0000305" key="3"/>
<proteinExistence type="inferred from homology"/>
<protein>
    <recommendedName>
        <fullName>Diacylglycerol kinase</fullName>
        <shortName>DAG kinase</shortName>
        <shortName>DAGK</shortName>
        <ecNumber evidence="1">2.7.1.107</ecNumber>
    </recommendedName>
</protein>
<reference key="1">
    <citation type="journal article" date="2004" name="Proc. Natl. Acad. Sci. U.S.A.">
        <title>Complete genomes of two clinical Staphylococcus aureus strains: evidence for the rapid evolution of virulence and drug resistance.</title>
        <authorList>
            <person name="Holden M.T.G."/>
            <person name="Feil E.J."/>
            <person name="Lindsay J.A."/>
            <person name="Peacock S.J."/>
            <person name="Day N.P.J."/>
            <person name="Enright M.C."/>
            <person name="Foster T.J."/>
            <person name="Moore C.E."/>
            <person name="Hurst L."/>
            <person name="Atkin R."/>
            <person name="Barron A."/>
            <person name="Bason N."/>
            <person name="Bentley S.D."/>
            <person name="Chillingworth C."/>
            <person name="Chillingworth T."/>
            <person name="Churcher C."/>
            <person name="Clark L."/>
            <person name="Corton C."/>
            <person name="Cronin A."/>
            <person name="Doggett J."/>
            <person name="Dowd L."/>
            <person name="Feltwell T."/>
            <person name="Hance Z."/>
            <person name="Harris B."/>
            <person name="Hauser H."/>
            <person name="Holroyd S."/>
            <person name="Jagels K."/>
            <person name="James K.D."/>
            <person name="Lennard N."/>
            <person name="Line A."/>
            <person name="Mayes R."/>
            <person name="Moule S."/>
            <person name="Mungall K."/>
            <person name="Ormond D."/>
            <person name="Quail M.A."/>
            <person name="Rabbinowitsch E."/>
            <person name="Rutherford K.M."/>
            <person name="Sanders M."/>
            <person name="Sharp S."/>
            <person name="Simmonds M."/>
            <person name="Stevens K."/>
            <person name="Whitehead S."/>
            <person name="Barrell B.G."/>
            <person name="Spratt B.G."/>
            <person name="Parkhill J."/>
        </authorList>
    </citation>
    <scope>NUCLEOTIDE SEQUENCE [LARGE SCALE GENOMIC DNA]</scope>
    <source>
        <strain>MSSA476</strain>
    </source>
</reference>
<name>DAGK_STAAS</name>
<keyword id="KW-0067">ATP-binding</keyword>
<keyword id="KW-0418">Kinase</keyword>
<keyword id="KW-0444">Lipid biosynthesis</keyword>
<keyword id="KW-0443">Lipid metabolism</keyword>
<keyword id="KW-0460">Magnesium</keyword>
<keyword id="KW-0479">Metal-binding</keyword>
<keyword id="KW-0547">Nucleotide-binding</keyword>
<keyword id="KW-0594">Phospholipid biosynthesis</keyword>
<keyword id="KW-1208">Phospholipid metabolism</keyword>
<keyword id="KW-0808">Transferase</keyword>
<comment type="function">
    <text evidence="1">Catalyzes the phosphorylation of diacylglycerol (DAG) into phosphatidic acid. Is a key enzyme involved in the production of lipoteichoic acid by reintroducing DAG formed from the breakdown of membrane phospholipids into the phosphatidylglycerol biosynthetic pathway.</text>
</comment>
<comment type="catalytic activity">
    <reaction evidence="1">
        <text>a 1,2-diacyl-sn-glycerol + ATP = a 1,2-diacyl-sn-glycero-3-phosphate + ADP + H(+)</text>
        <dbReference type="Rhea" id="RHEA:10272"/>
        <dbReference type="ChEBI" id="CHEBI:15378"/>
        <dbReference type="ChEBI" id="CHEBI:17815"/>
        <dbReference type="ChEBI" id="CHEBI:30616"/>
        <dbReference type="ChEBI" id="CHEBI:58608"/>
        <dbReference type="ChEBI" id="CHEBI:456216"/>
        <dbReference type="EC" id="2.7.1.107"/>
    </reaction>
</comment>
<comment type="cofactor">
    <cofactor evidence="1">
        <name>Mg(2+)</name>
        <dbReference type="ChEBI" id="CHEBI:18420"/>
    </cofactor>
    <text evidence="1">Binds 1 Mg(2+) ion per subunit. This ion appears to have a structural role and is required for catalytic activity.</text>
</comment>
<comment type="subunit">
    <text evidence="1">Homodimer.</text>
</comment>
<comment type="similarity">
    <text evidence="3">Belongs to the diacylglycerol/lipid kinase family.</text>
</comment>